<evidence type="ECO:0000250" key="1"/>
<evidence type="ECO:0000255" key="2"/>
<evidence type="ECO:0000255" key="3">
    <source>
        <dbReference type="PROSITE-ProRule" id="PRU10095"/>
    </source>
</evidence>
<evidence type="ECO:0000305" key="4"/>
<name>Y242_HELPJ</name>
<keyword id="KW-0997">Cell inner membrane</keyword>
<keyword id="KW-1003">Cell membrane</keyword>
<keyword id="KW-0378">Hydrolase</keyword>
<keyword id="KW-0472">Membrane</keyword>
<keyword id="KW-0479">Metal-binding</keyword>
<keyword id="KW-0482">Metalloprotease</keyword>
<keyword id="KW-0645">Protease</keyword>
<keyword id="KW-0812">Transmembrane</keyword>
<keyword id="KW-1133">Transmembrane helix</keyword>
<keyword id="KW-0862">Zinc</keyword>
<gene>
    <name type="ordered locus">jhp_0242</name>
</gene>
<organism>
    <name type="scientific">Helicobacter pylori (strain J99 / ATCC 700824)</name>
    <name type="common">Campylobacter pylori J99</name>
    <dbReference type="NCBI Taxonomy" id="85963"/>
    <lineage>
        <taxon>Bacteria</taxon>
        <taxon>Pseudomonadati</taxon>
        <taxon>Campylobacterota</taxon>
        <taxon>Epsilonproteobacteria</taxon>
        <taxon>Campylobacterales</taxon>
        <taxon>Helicobacteraceae</taxon>
        <taxon>Helicobacter</taxon>
    </lineage>
</organism>
<feature type="chain" id="PRO_0000088444" description="Putative zinc metalloprotease jhp_0242">
    <location>
        <begin position="1"/>
        <end position="350"/>
    </location>
</feature>
<feature type="transmembrane region" description="Helical" evidence="2">
    <location>
        <begin position="43"/>
        <end position="63"/>
    </location>
</feature>
<feature type="transmembrane region" description="Helical" evidence="2">
    <location>
        <begin position="94"/>
        <end position="114"/>
    </location>
</feature>
<feature type="transmembrane region" description="Helical" evidence="2">
    <location>
        <begin position="249"/>
        <end position="269"/>
    </location>
</feature>
<feature type="transmembrane region" description="Helical" evidence="2">
    <location>
        <begin position="277"/>
        <end position="297"/>
    </location>
</feature>
<feature type="transmembrane region" description="Helical" evidence="2">
    <location>
        <begin position="326"/>
        <end position="346"/>
    </location>
</feature>
<feature type="domain" description="PDZ">
    <location>
        <begin position="108"/>
        <end position="177"/>
    </location>
</feature>
<feature type="active site" evidence="3">
    <location>
        <position position="17"/>
    </location>
</feature>
<feature type="binding site" evidence="3">
    <location>
        <position position="16"/>
    </location>
    <ligand>
        <name>Zn(2+)</name>
        <dbReference type="ChEBI" id="CHEBI:29105"/>
        <note>catalytic</note>
    </ligand>
</feature>
<feature type="binding site" evidence="3">
    <location>
        <position position="20"/>
    </location>
    <ligand>
        <name>Zn(2+)</name>
        <dbReference type="ChEBI" id="CHEBI:29105"/>
        <note>catalytic</note>
    </ligand>
</feature>
<proteinExistence type="inferred from homology"/>
<sequence length="350" mass="38864">MFIVAVLMLAFLIFVHELGHFIIARICGVKVEVFSIGFGKKLWFFKLFGTQFALSLIPLGGYVKLKGMDKEENEENKINQANDSYAQKSPFQKLWILFGGAFFNFLFAVLVYFFLALSGEKVLLPVIGGLEKNALEAGLLKGDRILSINHQKIASFREIREIVARSQGELILEIERNNQILEKRLTPKIVAVISESNDPNEIIKYKIIGIKPDMQKMGVVSYSVFQAFEKALSRFKEGVVLIVDSLRRLIMGSASVKELSGVIGIVGALSHANSVSMLLLFGAFLSINLGILNLLPIPALDGAQMLGVVFKNIFHIALPTPIQNALWLVGVGFLVFVMFLGLFNDITRLL</sequence>
<accession>Q9ZMH8</accession>
<comment type="cofactor">
    <cofactor evidence="4">
        <name>Zn(2+)</name>
        <dbReference type="ChEBI" id="CHEBI:29105"/>
    </cofactor>
</comment>
<comment type="subcellular location">
    <subcellularLocation>
        <location evidence="1">Cell inner membrane</location>
        <topology evidence="1">Multi-pass membrane protein</topology>
    </subcellularLocation>
</comment>
<comment type="similarity">
    <text evidence="4">Belongs to the peptidase M50B family.</text>
</comment>
<comment type="sequence caution" evidence="4">
    <conflict type="erroneous initiation">
        <sequence resource="EMBL-CDS" id="AAD05832"/>
    </conflict>
</comment>
<protein>
    <recommendedName>
        <fullName>Putative zinc metalloprotease jhp_0242</fullName>
        <ecNumber>3.4.24.-</ecNumber>
    </recommendedName>
</protein>
<dbReference type="EC" id="3.4.24.-"/>
<dbReference type="EMBL" id="AE001439">
    <property type="protein sequence ID" value="AAD05832.1"/>
    <property type="status" value="ALT_INIT"/>
    <property type="molecule type" value="Genomic_DNA"/>
</dbReference>
<dbReference type="PIR" id="D71955">
    <property type="entry name" value="D71955"/>
</dbReference>
<dbReference type="SMR" id="Q9ZMH8"/>
<dbReference type="KEGG" id="hpj:jhp_0242"/>
<dbReference type="eggNOG" id="COG0750">
    <property type="taxonomic scope" value="Bacteria"/>
</dbReference>
<dbReference type="Proteomes" id="UP000000804">
    <property type="component" value="Chromosome"/>
</dbReference>
<dbReference type="GO" id="GO:0005886">
    <property type="term" value="C:plasma membrane"/>
    <property type="evidence" value="ECO:0007669"/>
    <property type="project" value="UniProtKB-SubCell"/>
</dbReference>
<dbReference type="GO" id="GO:0046872">
    <property type="term" value="F:metal ion binding"/>
    <property type="evidence" value="ECO:0007669"/>
    <property type="project" value="UniProtKB-KW"/>
</dbReference>
<dbReference type="GO" id="GO:0004222">
    <property type="term" value="F:metalloendopeptidase activity"/>
    <property type="evidence" value="ECO:0007669"/>
    <property type="project" value="InterPro"/>
</dbReference>
<dbReference type="GO" id="GO:0006508">
    <property type="term" value="P:proteolysis"/>
    <property type="evidence" value="ECO:0007669"/>
    <property type="project" value="UniProtKB-KW"/>
</dbReference>
<dbReference type="CDD" id="cd23081">
    <property type="entry name" value="cpPDZ_EcRseP-like"/>
    <property type="match status" value="1"/>
</dbReference>
<dbReference type="CDD" id="cd06163">
    <property type="entry name" value="S2P-M50_PDZ_RseP-like"/>
    <property type="match status" value="1"/>
</dbReference>
<dbReference type="Gene3D" id="2.30.42.10">
    <property type="match status" value="1"/>
</dbReference>
<dbReference type="InterPro" id="IPR036034">
    <property type="entry name" value="PDZ_sf"/>
</dbReference>
<dbReference type="InterPro" id="IPR004387">
    <property type="entry name" value="Pept_M50_Zn"/>
</dbReference>
<dbReference type="InterPro" id="IPR008915">
    <property type="entry name" value="Peptidase_M50"/>
</dbReference>
<dbReference type="NCBIfam" id="TIGR00054">
    <property type="entry name" value="RIP metalloprotease RseP"/>
    <property type="match status" value="2"/>
</dbReference>
<dbReference type="PANTHER" id="PTHR42837:SF2">
    <property type="entry name" value="MEMBRANE METALLOPROTEASE ARASP2, CHLOROPLASTIC-RELATED"/>
    <property type="match status" value="1"/>
</dbReference>
<dbReference type="PANTHER" id="PTHR42837">
    <property type="entry name" value="REGULATOR OF SIGMA-E PROTEASE RSEP"/>
    <property type="match status" value="1"/>
</dbReference>
<dbReference type="Pfam" id="PF02163">
    <property type="entry name" value="Peptidase_M50"/>
    <property type="match status" value="1"/>
</dbReference>
<dbReference type="SUPFAM" id="SSF50156">
    <property type="entry name" value="PDZ domain-like"/>
    <property type="match status" value="1"/>
</dbReference>
<dbReference type="PROSITE" id="PS00142">
    <property type="entry name" value="ZINC_PROTEASE"/>
    <property type="match status" value="1"/>
</dbReference>
<reference key="1">
    <citation type="journal article" date="1999" name="Nature">
        <title>Genomic sequence comparison of two unrelated isolates of the human gastric pathogen Helicobacter pylori.</title>
        <authorList>
            <person name="Alm R.A."/>
            <person name="Ling L.-S.L."/>
            <person name="Moir D.T."/>
            <person name="King B.L."/>
            <person name="Brown E.D."/>
            <person name="Doig P.C."/>
            <person name="Smith D.R."/>
            <person name="Noonan B."/>
            <person name="Guild B.C."/>
            <person name="deJonge B.L."/>
            <person name="Carmel G."/>
            <person name="Tummino P.J."/>
            <person name="Caruso A."/>
            <person name="Uria-Nickelsen M."/>
            <person name="Mills D.M."/>
            <person name="Ives C."/>
            <person name="Gibson R."/>
            <person name="Merberg D."/>
            <person name="Mills S.D."/>
            <person name="Jiang Q."/>
            <person name="Taylor D.E."/>
            <person name="Vovis G.F."/>
            <person name="Trust T.J."/>
        </authorList>
    </citation>
    <scope>NUCLEOTIDE SEQUENCE [LARGE SCALE GENOMIC DNA]</scope>
    <source>
        <strain>J99 / ATCC 700824</strain>
    </source>
</reference>